<protein>
    <recommendedName>
        <fullName evidence="1">Phosphopentomutase</fullName>
        <ecNumber evidence="1">5.4.2.7</ecNumber>
    </recommendedName>
    <alternativeName>
        <fullName evidence="1">Phosphodeoxyribomutase</fullName>
    </alternativeName>
</protein>
<sequence length="407" mass="45438">MKRVFLIVLDSFGIGSSPDADKFNDVGSNTFGHIVEKCFLGEANVGRKGVLCIPNLVKLGIINAAKESTGQYPLGFNYSSNVIASYGFASEISSGKDTTSGHWEIAGVPVLDDWYYFKEKQNSFPESLLEKIIRRSELTGFIGNCHASGTDIISRLGEEHIQTKKPIVYTSSDSVFQIACHEEFFGLSNLYKLCKTVRFILDQYNYKVARVIARPFIGNDKLQFQRTGNRRDFSIKPFATTVIKKLIDEKQGQVIAIGKVSDIYGGIGISKNIKSTGLYELCSTTIHEMKKALNNTIVFTNLVDFDSNWGHRRDVSGYAKGLELFDSRLSEIISLVQKNDLLILTADHGCDPTWIGTDHTRENVPVLIYSPGIKKNFLGHRKTFADIGQTIAKYFLLTDMSYGQNML</sequence>
<evidence type="ECO:0000255" key="1">
    <source>
        <dbReference type="HAMAP-Rule" id="MF_00740"/>
    </source>
</evidence>
<dbReference type="EC" id="5.4.2.7" evidence="1"/>
<dbReference type="EMBL" id="CP001161">
    <property type="protein sequence ID" value="ACL30885.1"/>
    <property type="molecule type" value="Genomic_DNA"/>
</dbReference>
<dbReference type="RefSeq" id="WP_009874492.1">
    <property type="nucleotide sequence ID" value="NC_011833.1"/>
</dbReference>
<dbReference type="SMR" id="B8D9W4"/>
<dbReference type="KEGG" id="bap:BUAP5A_535"/>
<dbReference type="HOGENOM" id="CLU_053861_0_0_6"/>
<dbReference type="OrthoDB" id="9769930at2"/>
<dbReference type="UniPathway" id="UPA00002">
    <property type="reaction ID" value="UER00467"/>
</dbReference>
<dbReference type="Proteomes" id="UP000006904">
    <property type="component" value="Chromosome"/>
</dbReference>
<dbReference type="GO" id="GO:0005829">
    <property type="term" value="C:cytosol"/>
    <property type="evidence" value="ECO:0007669"/>
    <property type="project" value="TreeGrafter"/>
</dbReference>
<dbReference type="GO" id="GO:0000287">
    <property type="term" value="F:magnesium ion binding"/>
    <property type="evidence" value="ECO:0007669"/>
    <property type="project" value="InterPro"/>
</dbReference>
<dbReference type="GO" id="GO:0030145">
    <property type="term" value="F:manganese ion binding"/>
    <property type="evidence" value="ECO:0007669"/>
    <property type="project" value="UniProtKB-UniRule"/>
</dbReference>
<dbReference type="GO" id="GO:0008973">
    <property type="term" value="F:phosphopentomutase activity"/>
    <property type="evidence" value="ECO:0007669"/>
    <property type="project" value="UniProtKB-UniRule"/>
</dbReference>
<dbReference type="GO" id="GO:0006018">
    <property type="term" value="P:2-deoxyribose 1-phosphate catabolic process"/>
    <property type="evidence" value="ECO:0007669"/>
    <property type="project" value="UniProtKB-UniRule"/>
</dbReference>
<dbReference type="GO" id="GO:0006015">
    <property type="term" value="P:5-phosphoribose 1-diphosphate biosynthetic process"/>
    <property type="evidence" value="ECO:0007669"/>
    <property type="project" value="UniProtKB-UniPathway"/>
</dbReference>
<dbReference type="GO" id="GO:0043094">
    <property type="term" value="P:metabolic compound salvage"/>
    <property type="evidence" value="ECO:0007669"/>
    <property type="project" value="InterPro"/>
</dbReference>
<dbReference type="GO" id="GO:0009117">
    <property type="term" value="P:nucleotide metabolic process"/>
    <property type="evidence" value="ECO:0007669"/>
    <property type="project" value="InterPro"/>
</dbReference>
<dbReference type="CDD" id="cd16009">
    <property type="entry name" value="PPM"/>
    <property type="match status" value="1"/>
</dbReference>
<dbReference type="FunFam" id="3.30.70.1250:FF:000001">
    <property type="entry name" value="Phosphopentomutase"/>
    <property type="match status" value="1"/>
</dbReference>
<dbReference type="Gene3D" id="3.40.720.10">
    <property type="entry name" value="Alkaline Phosphatase, subunit A"/>
    <property type="match status" value="1"/>
</dbReference>
<dbReference type="Gene3D" id="3.30.70.1250">
    <property type="entry name" value="Phosphopentomutase"/>
    <property type="match status" value="1"/>
</dbReference>
<dbReference type="HAMAP" id="MF_00740">
    <property type="entry name" value="Phosphopentomut"/>
    <property type="match status" value="1"/>
</dbReference>
<dbReference type="InterPro" id="IPR017850">
    <property type="entry name" value="Alkaline_phosphatase_core_sf"/>
</dbReference>
<dbReference type="InterPro" id="IPR010045">
    <property type="entry name" value="DeoB"/>
</dbReference>
<dbReference type="InterPro" id="IPR006124">
    <property type="entry name" value="Metalloenzyme"/>
</dbReference>
<dbReference type="InterPro" id="IPR024052">
    <property type="entry name" value="Phosphopentomutase_DeoB_cap_sf"/>
</dbReference>
<dbReference type="NCBIfam" id="TIGR01696">
    <property type="entry name" value="deoB"/>
    <property type="match status" value="1"/>
</dbReference>
<dbReference type="NCBIfam" id="NF003766">
    <property type="entry name" value="PRK05362.1"/>
    <property type="match status" value="1"/>
</dbReference>
<dbReference type="PANTHER" id="PTHR21110">
    <property type="entry name" value="PHOSPHOPENTOMUTASE"/>
    <property type="match status" value="1"/>
</dbReference>
<dbReference type="PANTHER" id="PTHR21110:SF0">
    <property type="entry name" value="PHOSPHOPENTOMUTASE"/>
    <property type="match status" value="1"/>
</dbReference>
<dbReference type="Pfam" id="PF01676">
    <property type="entry name" value="Metalloenzyme"/>
    <property type="match status" value="1"/>
</dbReference>
<dbReference type="PIRSF" id="PIRSF001491">
    <property type="entry name" value="Ppentomutase"/>
    <property type="match status" value="1"/>
</dbReference>
<dbReference type="SUPFAM" id="SSF53649">
    <property type="entry name" value="Alkaline phosphatase-like"/>
    <property type="match status" value="1"/>
</dbReference>
<dbReference type="SUPFAM" id="SSF143856">
    <property type="entry name" value="DeoB insert domain-like"/>
    <property type="match status" value="1"/>
</dbReference>
<gene>
    <name evidence="1" type="primary">deoB</name>
    <name type="ordered locus">BUAP5A_535</name>
</gene>
<keyword id="KW-0963">Cytoplasm</keyword>
<keyword id="KW-0413">Isomerase</keyword>
<keyword id="KW-0464">Manganese</keyword>
<keyword id="KW-0479">Metal-binding</keyword>
<comment type="function">
    <text evidence="1">Isomerase that catalyzes the conversion of deoxy-ribose 1-phosphate (dRib-1-P) and ribose 1-phosphate (Rib-1-P) to deoxy-ribose 5-phosphate (dRib-5-P) and ribose 5-phosphate (Rib-5-P), respectively.</text>
</comment>
<comment type="catalytic activity">
    <reaction evidence="1">
        <text>2-deoxy-alpha-D-ribose 1-phosphate = 2-deoxy-D-ribose 5-phosphate</text>
        <dbReference type="Rhea" id="RHEA:27658"/>
        <dbReference type="ChEBI" id="CHEBI:57259"/>
        <dbReference type="ChEBI" id="CHEBI:62877"/>
        <dbReference type="EC" id="5.4.2.7"/>
    </reaction>
</comment>
<comment type="catalytic activity">
    <reaction evidence="1">
        <text>alpha-D-ribose 1-phosphate = D-ribose 5-phosphate</text>
        <dbReference type="Rhea" id="RHEA:18793"/>
        <dbReference type="ChEBI" id="CHEBI:57720"/>
        <dbReference type="ChEBI" id="CHEBI:78346"/>
        <dbReference type="EC" id="5.4.2.7"/>
    </reaction>
</comment>
<comment type="cofactor">
    <cofactor evidence="1">
        <name>Mn(2+)</name>
        <dbReference type="ChEBI" id="CHEBI:29035"/>
    </cofactor>
    <text evidence="1">Binds 2 manganese ions.</text>
</comment>
<comment type="pathway">
    <text evidence="1">Carbohydrate degradation; 2-deoxy-D-ribose 1-phosphate degradation; D-glyceraldehyde 3-phosphate and acetaldehyde from 2-deoxy-alpha-D-ribose 1-phosphate: step 1/2.</text>
</comment>
<comment type="subcellular location">
    <subcellularLocation>
        <location evidence="1">Cytoplasm</location>
    </subcellularLocation>
</comment>
<comment type="similarity">
    <text evidence="1">Belongs to the phosphopentomutase family.</text>
</comment>
<organism>
    <name type="scientific">Buchnera aphidicola subsp. Acyrthosiphon pisum (strain 5A)</name>
    <dbReference type="NCBI Taxonomy" id="563178"/>
    <lineage>
        <taxon>Bacteria</taxon>
        <taxon>Pseudomonadati</taxon>
        <taxon>Pseudomonadota</taxon>
        <taxon>Gammaproteobacteria</taxon>
        <taxon>Enterobacterales</taxon>
        <taxon>Erwiniaceae</taxon>
        <taxon>Buchnera</taxon>
    </lineage>
</organism>
<proteinExistence type="inferred from homology"/>
<accession>B8D9W4</accession>
<feature type="chain" id="PRO_1000148237" description="Phosphopentomutase">
    <location>
        <begin position="1"/>
        <end position="407"/>
    </location>
</feature>
<feature type="binding site" evidence="1">
    <location>
        <position position="10"/>
    </location>
    <ligand>
        <name>Mn(2+)</name>
        <dbReference type="ChEBI" id="CHEBI:29035"/>
        <label>1</label>
    </ligand>
</feature>
<feature type="binding site" evidence="1">
    <location>
        <position position="306"/>
    </location>
    <ligand>
        <name>Mn(2+)</name>
        <dbReference type="ChEBI" id="CHEBI:29035"/>
        <label>2</label>
    </ligand>
</feature>
<feature type="binding site" evidence="1">
    <location>
        <position position="311"/>
    </location>
    <ligand>
        <name>Mn(2+)</name>
        <dbReference type="ChEBI" id="CHEBI:29035"/>
        <label>2</label>
    </ligand>
</feature>
<feature type="binding site" evidence="1">
    <location>
        <position position="347"/>
    </location>
    <ligand>
        <name>Mn(2+)</name>
        <dbReference type="ChEBI" id="CHEBI:29035"/>
        <label>1</label>
    </ligand>
</feature>
<feature type="binding site" evidence="1">
    <location>
        <position position="348"/>
    </location>
    <ligand>
        <name>Mn(2+)</name>
        <dbReference type="ChEBI" id="CHEBI:29035"/>
        <label>1</label>
    </ligand>
</feature>
<feature type="binding site" evidence="1">
    <location>
        <position position="359"/>
    </location>
    <ligand>
        <name>Mn(2+)</name>
        <dbReference type="ChEBI" id="CHEBI:29035"/>
        <label>2</label>
    </ligand>
</feature>
<reference key="1">
    <citation type="journal article" date="2009" name="Science">
        <title>The dynamics and time scale of ongoing genomic erosion in symbiotic bacteria.</title>
        <authorList>
            <person name="Moran N.A."/>
            <person name="McLaughlin H.J."/>
            <person name="Sorek R."/>
        </authorList>
    </citation>
    <scope>NUCLEOTIDE SEQUENCE [LARGE SCALE GENOMIC DNA]</scope>
    <source>
        <strain>5A</strain>
    </source>
</reference>
<name>DEOB_BUCA5</name>